<dbReference type="EMBL" id="CP000800">
    <property type="protein sequence ID" value="ABV20818.1"/>
    <property type="molecule type" value="Genomic_DNA"/>
</dbReference>
<dbReference type="RefSeq" id="WP_000431363.1">
    <property type="nucleotide sequence ID" value="NC_009801.1"/>
</dbReference>
<dbReference type="SMR" id="A7ZMV4"/>
<dbReference type="KEGG" id="ecw:EcE24377A_2060"/>
<dbReference type="HOGENOM" id="CLU_113254_0_0_6"/>
<dbReference type="Proteomes" id="UP000001122">
    <property type="component" value="Chromosome"/>
</dbReference>
<dbReference type="GO" id="GO:0005829">
    <property type="term" value="C:cytosol"/>
    <property type="evidence" value="ECO:0007669"/>
    <property type="project" value="TreeGrafter"/>
</dbReference>
<dbReference type="GO" id="GO:0033592">
    <property type="term" value="F:RNA strand annealing activity"/>
    <property type="evidence" value="ECO:0007669"/>
    <property type="project" value="UniProtKB-UniRule"/>
</dbReference>
<dbReference type="GO" id="GO:0034057">
    <property type="term" value="F:RNA strand-exchange activity"/>
    <property type="evidence" value="ECO:0007669"/>
    <property type="project" value="UniProtKB-UniRule"/>
</dbReference>
<dbReference type="GO" id="GO:0010608">
    <property type="term" value="P:post-transcriptional regulation of gene expression"/>
    <property type="evidence" value="ECO:0007669"/>
    <property type="project" value="InterPro"/>
</dbReference>
<dbReference type="FunFam" id="1.10.1710.10:FF:000001">
    <property type="entry name" value="RNA chaperone ProQ"/>
    <property type="match status" value="1"/>
</dbReference>
<dbReference type="Gene3D" id="1.10.1710.10">
    <property type="entry name" value="ProQ/FinO domain"/>
    <property type="match status" value="1"/>
</dbReference>
<dbReference type="HAMAP" id="MF_00749">
    <property type="entry name" value="ProQ"/>
    <property type="match status" value="1"/>
</dbReference>
<dbReference type="InterPro" id="IPR023529">
    <property type="entry name" value="ProQ"/>
</dbReference>
<dbReference type="InterPro" id="IPR016103">
    <property type="entry name" value="ProQ/FinO"/>
</dbReference>
<dbReference type="InterPro" id="IPR036442">
    <property type="entry name" value="ProQ/FinO_sf"/>
</dbReference>
<dbReference type="InterPro" id="IPR035236">
    <property type="entry name" value="ProQ_C"/>
</dbReference>
<dbReference type="NCBIfam" id="NF003434">
    <property type="entry name" value="PRK04950.1"/>
    <property type="match status" value="1"/>
</dbReference>
<dbReference type="PANTHER" id="PTHR38106">
    <property type="entry name" value="RNA CHAPERONE PROQ"/>
    <property type="match status" value="1"/>
</dbReference>
<dbReference type="PANTHER" id="PTHR38106:SF1">
    <property type="entry name" value="RNA CHAPERONE PROQ"/>
    <property type="match status" value="1"/>
</dbReference>
<dbReference type="Pfam" id="PF04352">
    <property type="entry name" value="ProQ"/>
    <property type="match status" value="1"/>
</dbReference>
<dbReference type="Pfam" id="PF17516">
    <property type="entry name" value="ProQ_C"/>
    <property type="match status" value="1"/>
</dbReference>
<dbReference type="SMART" id="SM00945">
    <property type="entry name" value="ProQ"/>
    <property type="match status" value="1"/>
</dbReference>
<dbReference type="SUPFAM" id="SSF48657">
    <property type="entry name" value="FinO-like"/>
    <property type="match status" value="1"/>
</dbReference>
<name>PROQ_ECO24</name>
<accession>A7ZMV4</accession>
<evidence type="ECO:0000255" key="1">
    <source>
        <dbReference type="HAMAP-Rule" id="MF_00749"/>
    </source>
</evidence>
<evidence type="ECO:0000256" key="2">
    <source>
        <dbReference type="SAM" id="MobiDB-lite"/>
    </source>
</evidence>
<protein>
    <recommendedName>
        <fullName evidence="1">RNA chaperone ProQ</fullName>
    </recommendedName>
</protein>
<sequence length="232" mass="25803">MENQPKLNSSKEVIAFLAERFPHCFSAEGEARPLKIGIFQDLVDRVAGEMNLSKTQLRSALRLYTSSWRYLYGVKPGATRVDLDGNPCGELDEQHVEHARKQLEEAKARVQAQRAEQQAKKREAAAAAGEKEDAPPRERKPRPTTPRRKEGAERKPRAQKPVEKAPKTVKAPREEQHTPVSDISALTVGQALKVKAGQNAMDATVLEITKDGVRVQLNSGMSLIVRAEHLVF</sequence>
<organism>
    <name type="scientific">Escherichia coli O139:H28 (strain E24377A / ETEC)</name>
    <dbReference type="NCBI Taxonomy" id="331111"/>
    <lineage>
        <taxon>Bacteria</taxon>
        <taxon>Pseudomonadati</taxon>
        <taxon>Pseudomonadota</taxon>
        <taxon>Gammaproteobacteria</taxon>
        <taxon>Enterobacterales</taxon>
        <taxon>Enterobacteriaceae</taxon>
        <taxon>Escherichia</taxon>
    </lineage>
</organism>
<gene>
    <name evidence="1" type="primary">proQ</name>
    <name type="ordered locus">EcE24377A_2060</name>
</gene>
<feature type="chain" id="PRO_1000062181" description="RNA chaperone ProQ">
    <location>
        <begin position="1"/>
        <end position="232"/>
    </location>
</feature>
<feature type="region of interest" description="Disordered" evidence="2">
    <location>
        <begin position="105"/>
        <end position="182"/>
    </location>
</feature>
<feature type="compositionally biased region" description="Basic and acidic residues" evidence="2">
    <location>
        <begin position="117"/>
        <end position="138"/>
    </location>
</feature>
<feature type="compositionally biased region" description="Basic and acidic residues" evidence="2">
    <location>
        <begin position="147"/>
        <end position="177"/>
    </location>
</feature>
<keyword id="KW-0143">Chaperone</keyword>
<keyword id="KW-0963">Cytoplasm</keyword>
<keyword id="KW-1185">Reference proteome</keyword>
<keyword id="KW-0694">RNA-binding</keyword>
<reference key="1">
    <citation type="journal article" date="2008" name="J. Bacteriol.">
        <title>The pangenome structure of Escherichia coli: comparative genomic analysis of E. coli commensal and pathogenic isolates.</title>
        <authorList>
            <person name="Rasko D.A."/>
            <person name="Rosovitz M.J."/>
            <person name="Myers G.S.A."/>
            <person name="Mongodin E.F."/>
            <person name="Fricke W.F."/>
            <person name="Gajer P."/>
            <person name="Crabtree J."/>
            <person name="Sebaihia M."/>
            <person name="Thomson N.R."/>
            <person name="Chaudhuri R."/>
            <person name="Henderson I.R."/>
            <person name="Sperandio V."/>
            <person name="Ravel J."/>
        </authorList>
    </citation>
    <scope>NUCLEOTIDE SEQUENCE [LARGE SCALE GENOMIC DNA]</scope>
    <source>
        <strain>E24377A / ETEC</strain>
    </source>
</reference>
<proteinExistence type="inferred from homology"/>
<comment type="function">
    <text evidence="1">RNA chaperone with significant RNA binding, RNA strand exchange and RNA duplexing activities. May regulate ProP activity through an RNA-based, post-transcriptional mechanism.</text>
</comment>
<comment type="subcellular location">
    <subcellularLocation>
        <location evidence="1">Cytoplasm</location>
    </subcellularLocation>
</comment>
<comment type="similarity">
    <text evidence="1">Belongs to the ProQ family.</text>
</comment>